<protein>
    <recommendedName>
        <fullName evidence="1">Ribosomal protein L11 methyltransferase</fullName>
        <shortName evidence="1">L11 Mtase</shortName>
        <ecNumber evidence="1">2.1.1.-</ecNumber>
    </recommendedName>
</protein>
<feature type="chain" id="PRO_0000192318" description="Ribosomal protein L11 methyltransferase">
    <location>
        <begin position="1"/>
        <end position="317"/>
    </location>
</feature>
<feature type="binding site" evidence="1">
    <location>
        <position position="158"/>
    </location>
    <ligand>
        <name>S-adenosyl-L-methionine</name>
        <dbReference type="ChEBI" id="CHEBI:59789"/>
    </ligand>
</feature>
<feature type="binding site" evidence="1">
    <location>
        <position position="179"/>
    </location>
    <ligand>
        <name>S-adenosyl-L-methionine</name>
        <dbReference type="ChEBI" id="CHEBI:59789"/>
    </ligand>
</feature>
<feature type="binding site" evidence="1">
    <location>
        <position position="201"/>
    </location>
    <ligand>
        <name>S-adenosyl-L-methionine</name>
        <dbReference type="ChEBI" id="CHEBI:59789"/>
    </ligand>
</feature>
<feature type="binding site" evidence="1">
    <location>
        <position position="244"/>
    </location>
    <ligand>
        <name>S-adenosyl-L-methionine</name>
        <dbReference type="ChEBI" id="CHEBI:59789"/>
    </ligand>
</feature>
<proteinExistence type="inferred from homology"/>
<organism>
    <name type="scientific">Streptococcus pyogenes serotype M1</name>
    <dbReference type="NCBI Taxonomy" id="301447"/>
    <lineage>
        <taxon>Bacteria</taxon>
        <taxon>Bacillati</taxon>
        <taxon>Bacillota</taxon>
        <taxon>Bacilli</taxon>
        <taxon>Lactobacillales</taxon>
        <taxon>Streptococcaceae</taxon>
        <taxon>Streptococcus</taxon>
    </lineage>
</organism>
<comment type="function">
    <text evidence="1">Methylates ribosomal protein L11.</text>
</comment>
<comment type="catalytic activity">
    <reaction evidence="1">
        <text>L-lysyl-[protein] + 3 S-adenosyl-L-methionine = N(6),N(6),N(6)-trimethyl-L-lysyl-[protein] + 3 S-adenosyl-L-homocysteine + 3 H(+)</text>
        <dbReference type="Rhea" id="RHEA:54192"/>
        <dbReference type="Rhea" id="RHEA-COMP:9752"/>
        <dbReference type="Rhea" id="RHEA-COMP:13826"/>
        <dbReference type="ChEBI" id="CHEBI:15378"/>
        <dbReference type="ChEBI" id="CHEBI:29969"/>
        <dbReference type="ChEBI" id="CHEBI:57856"/>
        <dbReference type="ChEBI" id="CHEBI:59789"/>
        <dbReference type="ChEBI" id="CHEBI:61961"/>
    </reaction>
</comment>
<comment type="subcellular location">
    <subcellularLocation>
        <location evidence="1">Cytoplasm</location>
    </subcellularLocation>
</comment>
<comment type="similarity">
    <text evidence="1">Belongs to the methyltransferase superfamily. PrmA family.</text>
</comment>
<dbReference type="EC" id="2.1.1.-" evidence="1"/>
<dbReference type="EMBL" id="AE004092">
    <property type="protein sequence ID" value="AAK34673.1"/>
    <property type="molecule type" value="Genomic_DNA"/>
</dbReference>
<dbReference type="EMBL" id="CP000017">
    <property type="protein sequence ID" value="AAZ52313.1"/>
    <property type="molecule type" value="Genomic_DNA"/>
</dbReference>
<dbReference type="RefSeq" id="NP_269952.1">
    <property type="nucleotide sequence ID" value="NC_002737.2"/>
</dbReference>
<dbReference type="SMR" id="Q99XW8"/>
<dbReference type="PaxDb" id="1314-HKU360_01808"/>
<dbReference type="KEGG" id="spy:SPy_1988"/>
<dbReference type="KEGG" id="spz:M5005_Spy1695"/>
<dbReference type="PATRIC" id="fig|160490.10.peg.1728"/>
<dbReference type="HOGENOM" id="CLU_049382_0_1_9"/>
<dbReference type="OMA" id="MYYEFFF"/>
<dbReference type="Proteomes" id="UP000000750">
    <property type="component" value="Chromosome"/>
</dbReference>
<dbReference type="GO" id="GO:0005737">
    <property type="term" value="C:cytoplasm"/>
    <property type="evidence" value="ECO:0007669"/>
    <property type="project" value="UniProtKB-SubCell"/>
</dbReference>
<dbReference type="GO" id="GO:0016279">
    <property type="term" value="F:protein-lysine N-methyltransferase activity"/>
    <property type="evidence" value="ECO:0007669"/>
    <property type="project" value="RHEA"/>
</dbReference>
<dbReference type="GO" id="GO:0032259">
    <property type="term" value="P:methylation"/>
    <property type="evidence" value="ECO:0007669"/>
    <property type="project" value="UniProtKB-KW"/>
</dbReference>
<dbReference type="CDD" id="cd02440">
    <property type="entry name" value="AdoMet_MTases"/>
    <property type="match status" value="1"/>
</dbReference>
<dbReference type="Gene3D" id="3.40.50.150">
    <property type="entry name" value="Vaccinia Virus protein VP39"/>
    <property type="match status" value="1"/>
</dbReference>
<dbReference type="HAMAP" id="MF_00735">
    <property type="entry name" value="Methyltr_PrmA"/>
    <property type="match status" value="1"/>
</dbReference>
<dbReference type="InterPro" id="IPR050078">
    <property type="entry name" value="Ribosomal_L11_MeTrfase_PrmA"/>
</dbReference>
<dbReference type="InterPro" id="IPR004498">
    <property type="entry name" value="Ribosomal_PrmA_MeTrfase"/>
</dbReference>
<dbReference type="InterPro" id="IPR029063">
    <property type="entry name" value="SAM-dependent_MTases_sf"/>
</dbReference>
<dbReference type="NCBIfam" id="TIGR00406">
    <property type="entry name" value="prmA"/>
    <property type="match status" value="1"/>
</dbReference>
<dbReference type="PANTHER" id="PTHR43648">
    <property type="entry name" value="ELECTRON TRANSFER FLAVOPROTEIN BETA SUBUNIT LYSINE METHYLTRANSFERASE"/>
    <property type="match status" value="1"/>
</dbReference>
<dbReference type="PANTHER" id="PTHR43648:SF1">
    <property type="entry name" value="ELECTRON TRANSFER FLAVOPROTEIN BETA SUBUNIT LYSINE METHYLTRANSFERASE"/>
    <property type="match status" value="1"/>
</dbReference>
<dbReference type="Pfam" id="PF06325">
    <property type="entry name" value="PrmA"/>
    <property type="match status" value="1"/>
</dbReference>
<dbReference type="PIRSF" id="PIRSF000401">
    <property type="entry name" value="RPL11_MTase"/>
    <property type="match status" value="1"/>
</dbReference>
<dbReference type="SUPFAM" id="SSF53335">
    <property type="entry name" value="S-adenosyl-L-methionine-dependent methyltransferases"/>
    <property type="match status" value="1"/>
</dbReference>
<reference key="1">
    <citation type="journal article" date="2001" name="Proc. Natl. Acad. Sci. U.S.A.">
        <title>Complete genome sequence of an M1 strain of Streptococcus pyogenes.</title>
        <authorList>
            <person name="Ferretti J.J."/>
            <person name="McShan W.M."/>
            <person name="Ajdic D.J."/>
            <person name="Savic D.J."/>
            <person name="Savic G."/>
            <person name="Lyon K."/>
            <person name="Primeaux C."/>
            <person name="Sezate S."/>
            <person name="Suvorov A.N."/>
            <person name="Kenton S."/>
            <person name="Lai H.S."/>
            <person name="Lin S.P."/>
            <person name="Qian Y."/>
            <person name="Jia H.G."/>
            <person name="Najar F.Z."/>
            <person name="Ren Q."/>
            <person name="Zhu H."/>
            <person name="Song L."/>
            <person name="White J."/>
            <person name="Yuan X."/>
            <person name="Clifton S.W."/>
            <person name="Roe B.A."/>
            <person name="McLaughlin R.E."/>
        </authorList>
    </citation>
    <scope>NUCLEOTIDE SEQUENCE [LARGE SCALE GENOMIC DNA]</scope>
    <source>
        <strain>ATCC 700294 / SF370 / Serotype M1</strain>
    </source>
</reference>
<reference key="2">
    <citation type="journal article" date="2005" name="J. Infect. Dis.">
        <title>Evolutionary origin and emergence of a highly successful clone of serotype M1 group A Streptococcus involved multiple horizontal gene transfer events.</title>
        <authorList>
            <person name="Sumby P."/>
            <person name="Porcella S.F."/>
            <person name="Madrigal A.G."/>
            <person name="Barbian K.D."/>
            <person name="Virtaneva K."/>
            <person name="Ricklefs S.M."/>
            <person name="Sturdevant D.E."/>
            <person name="Graham M.R."/>
            <person name="Vuopio-Varkila J."/>
            <person name="Hoe N.P."/>
            <person name="Musser J.M."/>
        </authorList>
    </citation>
    <scope>NUCLEOTIDE SEQUENCE [LARGE SCALE GENOMIC DNA]</scope>
    <source>
        <strain>ATCC BAA-947 / MGAS5005 / Serotype M1</strain>
    </source>
</reference>
<name>PRMA_STRP1</name>
<gene>
    <name evidence="1" type="primary">prmA</name>
    <name type="ordered locus">SPy_1988</name>
    <name type="ordered locus">M5005_Spy1695</name>
</gene>
<evidence type="ECO:0000255" key="1">
    <source>
        <dbReference type="HAMAP-Rule" id="MF_00735"/>
    </source>
</evidence>
<keyword id="KW-0963">Cytoplasm</keyword>
<keyword id="KW-0489">Methyltransferase</keyword>
<keyword id="KW-1185">Reference proteome</keyword>
<keyword id="KW-0949">S-adenosyl-L-methionine</keyword>
<keyword id="KW-0808">Transferase</keyword>
<accession>Q99XW8</accession>
<accession>Q48WG2</accession>
<sequence>METWQEVTVHVHRDAQEAVSHVLIETGSQGVAIADSADYIGQKDRFGELYPDVEQSDMIAITAYYPSSTNLADIIATINEQLAELASFGLQVGQVTVDSQELAEEDWADNWKKYYEPARITHDLTIVPSWTDYDASAGEKVIKLDPGMAFGTGTHPTTKMSLFALEQILRGGETVIDVGTGSGVLSIASSLLGAKTIYAYDLDDVAVRVAQDNIDLNQGTDNIHVAAGDLLKGVSQEADVIVANILADILVLLTDDAYRLVKKEGYLILSGIISEKLDMVLEAAFSAGFFLETHMVQGEWNALVFKKTDDISGVIGG</sequence>